<accession>A0A0B5AC19</accession>
<accession>F1BA49</accession>
<dbReference type="EMBL" id="HM745932">
    <property type="protein sequence ID" value="ADZ04473.1"/>
    <property type="molecule type" value="Genomic_RNA"/>
</dbReference>
<dbReference type="EMBL" id="KP202165">
    <property type="protein sequence ID" value="AJD86041.1"/>
    <property type="molecule type" value="Genomic_RNA"/>
</dbReference>
<dbReference type="RefSeq" id="YP_006504093.1">
    <property type="nucleotide sequence ID" value="NC_018137.1"/>
</dbReference>
<dbReference type="IntAct" id="A0A0B5AC19">
    <property type="interactions" value="4"/>
</dbReference>
<dbReference type="KEGG" id="vg:13231113"/>
<dbReference type="OrthoDB" id="23185at10239"/>
<dbReference type="Proteomes" id="UP000117954">
    <property type="component" value="Genome"/>
</dbReference>
<dbReference type="Proteomes" id="UP000201130">
    <property type="component" value="Genome"/>
</dbReference>
<dbReference type="GO" id="GO:0044161">
    <property type="term" value="C:host cell cytoplasmic vesicle"/>
    <property type="evidence" value="ECO:0007669"/>
    <property type="project" value="UniProtKB-SubCell"/>
</dbReference>
<dbReference type="GO" id="GO:0039592">
    <property type="term" value="P:symbiont-mediated arrest of host cell cycle during G2/M transition"/>
    <property type="evidence" value="ECO:0007669"/>
    <property type="project" value="UniProtKB-KW"/>
</dbReference>
<dbReference type="GO" id="GO:0039540">
    <property type="term" value="P:symbiont-mediated suppression of host cytoplasmic pattern recognition receptor signaling pathway via inhibition of RIG-I activity"/>
    <property type="evidence" value="ECO:0007669"/>
    <property type="project" value="UniProtKB-KW"/>
</dbReference>
<dbReference type="GO" id="GO:0039723">
    <property type="term" value="P:symbiont-mediated suppression of host cytoplasmic pattern recognition receptor signaling pathway via inhibition of TBK1 activity"/>
    <property type="evidence" value="ECO:0007669"/>
    <property type="project" value="UniProtKB-KW"/>
</dbReference>
<dbReference type="GO" id="GO:0039564">
    <property type="term" value="P:symbiont-mediated suppression of host JAK-STAT cascade via inhibition of STAT2 activity"/>
    <property type="evidence" value="ECO:0007669"/>
    <property type="project" value="UniProtKB-KW"/>
</dbReference>
<dbReference type="GO" id="GO:0039722">
    <property type="term" value="P:symbiont-mediated suppression of host toll-like receptor signaling pathway"/>
    <property type="evidence" value="ECO:0007669"/>
    <property type="project" value="UniProtKB-KW"/>
</dbReference>
<dbReference type="GO" id="GO:0039502">
    <property type="term" value="P:symbiont-mediated suppression of host type I interferon-mediated signaling pathway"/>
    <property type="evidence" value="ECO:0007669"/>
    <property type="project" value="UniProtKB-KW"/>
</dbReference>
<name>NSS_SFTSV</name>
<reference key="1">
    <citation type="journal article" date="2011" name="N. Engl. J. Med.">
        <title>Fever with thrombocytopenia associated with a novel bunyavirus in China.</title>
        <authorList>
            <person name="Yu X.J."/>
            <person name="Liang M.F."/>
            <person name="Zhang S.Y."/>
            <person name="Liu Y."/>
            <person name="Li J.D."/>
            <person name="Sun Y.L."/>
            <person name="Zhang L."/>
            <person name="Zhang Q.F."/>
            <person name="Popov V.L."/>
            <person name="Li C."/>
            <person name="Qu J."/>
            <person name="Li Q."/>
            <person name="Zhang Y.P."/>
            <person name="Hai R."/>
            <person name="Wu W."/>
            <person name="Wang Q."/>
            <person name="Zhan F.X."/>
            <person name="Wang X.J."/>
            <person name="Kan B."/>
            <person name="Wang S.W."/>
            <person name="Wan K.L."/>
            <person name="Jing H.Q."/>
            <person name="Lu J.X."/>
            <person name="Yin W.W."/>
            <person name="Zhou H."/>
            <person name="Guan X.H."/>
            <person name="Liu J.F."/>
            <person name="Bi Z.Q."/>
            <person name="Liu G.H."/>
            <person name="Ren J."/>
            <person name="Wang H."/>
            <person name="Zhao Z."/>
            <person name="Song J.D."/>
            <person name="He J.R."/>
            <person name="Wan T."/>
            <person name="Zhang J.S."/>
            <person name="Fu X.P."/>
            <person name="Sun L.N."/>
            <person name="Dong X.P."/>
            <person name="Feng Z.J."/>
            <person name="Yang W.Z."/>
            <person name="Hong T."/>
            <person name="Zhang Y."/>
            <person name="Walker D.H."/>
            <person name="Wang Y."/>
            <person name="Li D.X."/>
        </authorList>
    </citation>
    <scope>NUCLEOTIDE SEQUENCE [GENOMIC DNA]</scope>
</reference>
<reference key="2">
    <citation type="journal article" date="2015" name="J. Virol.">
        <title>A reverse genetic system for severe fever with thrombocytopenia syndrome virus.</title>
        <authorList>
            <person name="Brennan B."/>
            <person name="Li P."/>
            <person name="Zhang S."/>
            <person name="Li A."/>
            <person name="Liang M."/>
            <person name="Li D."/>
            <person name="Elliott R.M."/>
        </authorList>
    </citation>
    <scope>NUCLEOTIDE SEQUENCE [GENOMIC DNA]</scope>
    <source>
        <strain>HB29</strain>
    </source>
</reference>
<reference key="3">
    <citation type="journal article" date="2014" name="J. Virol.">
        <title>Hijacking of RIG-I signaling proteins into virus-induced cytoplasmic structures correlates with the inhibition of type I interferon responses.</title>
        <authorList>
            <person name="Santiago F.W."/>
            <person name="Covaleda L.M."/>
            <person name="Sanchez-Aparicio M.T."/>
            <person name="Silvas J.A."/>
            <person name="Diaz-Vizarreta A.C."/>
            <person name="Patel J.R."/>
            <person name="Popov V."/>
            <person name="Yu X.J."/>
            <person name="Garcia-Sastre A."/>
            <person name="Aguilar P.V."/>
        </authorList>
    </citation>
    <scope>FUNCTION</scope>
    <scope>INTERACTION WITH HOST TRIM25</scope>
    <scope>INTERACTION WITH HOST RIGI</scope>
    <scope>INTERACTION WITH HOST TBK1</scope>
    <scope>SUBCELLULAR LOCATION</scope>
</reference>
<reference key="4">
    <citation type="journal article" date="2014" name="J. Mol. Cell Biol.">
        <title>Viral suppression of innate immunity via spatial isolation of TBK1/IKKepsilon from mitochondrial antiviral platform.</title>
        <authorList>
            <person name="Ning Y.J."/>
            <person name="Wang M."/>
            <person name="Deng M."/>
            <person name="Shen S."/>
            <person name="Liu W."/>
            <person name="Cao W.C."/>
            <person name="Deng F."/>
            <person name="Wang Y.Y."/>
            <person name="Hu Z."/>
            <person name="Wang H."/>
        </authorList>
    </citation>
    <scope>FUNCTION</scope>
    <scope>MUTAGENESIS OF 66-PRO--PRO-69</scope>
    <scope>INTERACTION WITH HOST TBK1</scope>
</reference>
<reference key="5">
    <citation type="journal article" date="2014" name="J. Virol.">
        <title>Evasion of antiviral immunity through sequestering of TBK1/IKKepsilon/IRF3 into viral inclusion bodies.</title>
        <authorList>
            <person name="Wu X."/>
            <person name="Qi X."/>
            <person name="Qu B."/>
            <person name="Zhang Z."/>
            <person name="Liang M."/>
            <person name="Li C."/>
            <person name="Cardona C.J."/>
            <person name="Li D."/>
            <person name="Xing Z."/>
        </authorList>
    </citation>
    <scope>FUNCTION</scope>
    <scope>INTERACTION WITH HOST TBK1</scope>
    <scope>SUBCELLULAR LOCATION</scope>
</reference>
<reference key="6">
    <citation type="journal article" date="2015" name="J. Virol.">
        <title>Disruption of type I interferon signaling by the nonstructural protein of severe fever with thrombocytopenia syndrome virus via the hijacking of STAT2 and STAT1 into inclusion bodies.</title>
        <authorList>
            <person name="Ning Y.J."/>
            <person name="Feng K."/>
            <person name="Min Y.Q."/>
            <person name="Cao W.C."/>
            <person name="Wang M."/>
            <person name="Deng F."/>
            <person name="Hu Z."/>
            <person name="Wang H."/>
        </authorList>
    </citation>
    <scope>FUNCTION</scope>
    <scope>INTERACTION WITH HOST STAT2</scope>
</reference>
<reference key="7">
    <citation type="journal article" date="2016" name="J. Biol. Chem.">
        <title>Synaptogyrin-2 promotes replication of a novel tick-borne bunyavirus through interacting with viral nonstructural protein NSs.</title>
        <authorList>
            <person name="Sun Q."/>
            <person name="Qi X."/>
            <person name="Zhang Y."/>
            <person name="Wu X."/>
            <person name="Liang M."/>
            <person name="Li C."/>
            <person name="Li D."/>
            <person name="Cardona C.J."/>
            <person name="Xing Z."/>
        </authorList>
    </citation>
    <scope>INTERACTION WITH HOST SYNGR2</scope>
    <scope>SUBCELLULAR LOCATION</scope>
    <scope>FUNCTION</scope>
</reference>
<reference key="8">
    <citation type="journal article" date="2017" name="MSphere">
        <title>Differential Antagonism of Human Innate Immune Responses by Tick-Borne Phlebovirus Nonstructural Proteins.</title>
        <authorList>
            <person name="Rezelj V.V."/>
            <person name="Li P."/>
            <person name="Chaudhary V."/>
            <person name="Elliott R.M."/>
            <person name="Jin D.Y."/>
            <person name="Brennan B."/>
        </authorList>
    </citation>
    <scope>FUNCTION</scope>
    <scope>SUBCELLULAR LOCATION</scope>
</reference>
<reference key="9">
    <citation type="journal article" date="2018" name="Microbes Infect.">
        <title>Nonstructural protein of severe fever with thrombocytopenia syndrome phlebovirus targets STAT2 and not STAT1 to inhibit type I interferon-stimulated JAK-STAT signaling.</title>
        <authorList>
            <person name="Kitagawa Y."/>
            <person name="Sakai M."/>
            <person name="Shimojima M."/>
            <person name="Saijo M."/>
            <person name="Itoh M."/>
            <person name="Gotoh B."/>
        </authorList>
    </citation>
    <scope>FUNCTION</scope>
    <scope>MUTAGENESIS OF 66-PRO--PRO-69</scope>
    <scope>INTERACTION WITH HOST STAT2</scope>
</reference>
<reference key="10">
    <citation type="journal article" date="2018" name="J. Virol.">
        <title>Two Conserved Amino Acids within the NSs of Severe Fever with Thrombocytopenia Syndrome Phlebovirus Are Essential for Anti-interferon Activity.</title>
        <authorList>
            <person name="Moriyama M."/>
            <person name="Igarashi M."/>
            <person name="Koshiba T."/>
            <person name="Irie T."/>
            <person name="Takada A."/>
            <person name="Ichinohe T."/>
        </authorList>
    </citation>
    <scope>FUNCTION</scope>
    <scope>INTERACTION WITH HOST TBK1</scope>
    <scope>MUTAGENESIS OF 21-VAL--LEU-23; 24-VAL--LEU-26; 27-VAL--LEU-29 AND 66-PRO--PRO-69</scope>
</reference>
<reference key="11">
    <citation type="journal article" date="2019" name="J. Immunol.">
        <title>Suppression of the IFN-alpha and -beta Induction through Sequestering IRF7 into Viral Inclusion Bodies by Nonstructural Protein NSs in Severe Fever with Thrombocytopenia Syndrome Bunyavirus Infection.</title>
        <authorList>
            <person name="Hong Y."/>
            <person name="Bai M."/>
            <person name="Qi X."/>
            <person name="Li C."/>
            <person name="Liang M."/>
            <person name="Li D."/>
            <person name="Cardona C.J."/>
            <person name="Xing Z."/>
        </authorList>
    </citation>
    <scope>FUNCTION</scope>
    <scope>INTERACTION WITH HOST IRF7</scope>
    <scope>SUBCELLULAR LOCATION</scope>
</reference>
<reference key="12">
    <citation type="journal article" date="2019" name="Nat. Microbiol.">
        <title>Severe fever with thrombocytopenia syndrome phlebovirus non-structural protein activates TPL2 signalling pathway for viral immunopathogenesis.</title>
        <authorList>
            <person name="Choi Y."/>
            <person name="Park S.J."/>
            <person name="Sun Y."/>
            <person name="Yoo J.S."/>
            <person name="Pudupakam R.S."/>
            <person name="Foo S.S."/>
            <person name="Shin W.J."/>
            <person name="Chen S.B."/>
            <person name="Tsichlis P.N."/>
            <person name="Lee W.J."/>
            <person name="Lee J.S."/>
            <person name="Li W."/>
            <person name="Brennan B."/>
            <person name="Choi Y.K."/>
            <person name="Jung J.U."/>
        </authorList>
    </citation>
    <scope>FUNCTION</scope>
    <scope>INTERACTION WITH HOST TNIP2</scope>
    <scope>MUTAGENESIS OF 66-PRO--PRO-69; PRO-102; 133-TRP--LEU-136 AND LYS-211</scope>
</reference>
<reference key="13">
    <citation type="journal article" date="2019" name="J. Virol.">
        <title>Species-Specific Pathogenicity of Severe Fever with Thrombocytopenia Syndrome Virus Is Determined by Anti-STAT2 Activity of NSs.</title>
        <authorList>
            <person name="Yoshikawa R."/>
            <person name="Sakabe S."/>
            <person name="Urata S."/>
            <person name="Yasuda J."/>
        </authorList>
    </citation>
    <scope>INTERACTION WITH HOST STAT2</scope>
</reference>
<reference key="14">
    <citation type="journal article" date="2020" name="J. Virol.">
        <title>Severe Fever with Thrombocytopenia Syndrome Virus NSs Interacts with TRIM21 To Activate the p62-Keap1-Nrf2 Pathway.</title>
        <authorList>
            <person name="Choi Y."/>
            <person name="Jiang Z."/>
            <person name="Shin W.J."/>
            <person name="Jung J.U."/>
        </authorList>
    </citation>
    <scope>INTERACTION WITH HOST TRIM21</scope>
    <scope>MUTAGENESIS OF 226-LYS--GLY-230</scope>
</reference>
<reference key="15">
    <citation type="journal article" date="2020" name="J. Virol.">
        <title>The Severe Fever with Thrombocytopenia Syndrome Virus NSs Protein Interacts with CDK1 To Induce G2 Cell Cycle Arrest and Positively Regulate Viral Replication.</title>
        <authorList>
            <person name="Liu S."/>
            <person name="Liu H."/>
            <person name="Kang J."/>
            <person name="Xu L."/>
            <person name="Zhang K."/>
            <person name="Li X."/>
            <person name="Hou W."/>
            <person name="Wang Z."/>
            <person name="Wang T."/>
        </authorList>
    </citation>
    <scope>FUNCTION</scope>
    <scope>INTERACTION WITH HOST CDK1</scope>
</reference>
<reference key="16">
    <citation type="journal article" date="2020" name="Mol. Cell. Biol.">
        <title>The Non-structural Protein NSs of SFTSV Causes Cytokine Storm Through the Hyper-activation of NF-kappaB.</title>
        <authorList>
            <person name="Khalil J."/>
            <person name="Yamada S."/>
            <person name="Tsukamoto Y."/>
            <person name="Abe H."/>
            <person name="Shimojima M."/>
            <person name="Kato H."/>
            <person name="Fujita T."/>
        </authorList>
    </citation>
    <scope>FUNCTION</scope>
</reference>
<reference key="17">
    <citation type="journal article" date="2020" name="J. Biol. Chem.">
        <title>A RIG-I-like receptor directs antiviral responses to a bunyavirus and is antagonized by virus-induced blockade of TRIM25-mediated ubiquitination.</title>
        <authorList>
            <person name="Min Y.Q."/>
            <person name="Ning Y.J."/>
            <person name="Wang H."/>
            <person name="Deng F."/>
        </authorList>
    </citation>
    <scope>INTERACTION WITH HOST TRIM25</scope>
    <scope>INTERACTION WITH HOST TBK1</scope>
    <scope>FUNCTION</scope>
</reference>
<gene>
    <name type="primary">NSS</name>
</gene>
<comment type="function">
    <text evidence="1 5 6 7 10 12 13 14 16 17 18 19 20">Sequesters host STAT2 into viral inclusion bodies (Probable) (PubMed:29886262). Impairs IFN-stimulated phosphorylation and nuclear translocation of host STAT2, thereby suppressing type-I IFN antiviral signaling (Probable) (PubMed:28680969, PubMed:29886262). Sequesters host TRIM25, RIGI, TBK1/IKK complex components (TBK1, IKBKE/IKKE, and IRF3) and IRF7 into viral inclusion bodies, thereby inhibiting the IFN responses (Probable). Inhibits TRIM25-mediated ubiquitination of the RIGI (PubMed:32471869). The sequestration of IKBKE/IKKE, and IRF3 occurs via the interaction with TBK1 (PubMed:24335286). Sequestration and inhibition of host TBK1 probably participates to the cytokine storm induced by the virus (PubMed:33288641). Also inhibits the phosphorylation of host TBK1 (PubMed:28680969). Interacts with host TNIP2 and promotes TPL2-TNIP2-p105 complex formation leading to IL-10 induction (PubMed:30617349). By interacting with CDK1, induces host cell arrest at the G2/M transition to promote viral replication (PubMed:31852787). Requested for the formation of the viral cytoplasmic inclusion bodies (PubMed:24335286, PubMed:27226560).</text>
</comment>
<comment type="subunit">
    <text evidence="1 2 3 4 5 7 8 9 10 11 12 13 21">Interacts with the host E3 ubiquitin ligase TRIM25; this interaction sequesters TRIM25 in NSs-induced cytoplasmic inclusion bodies (PubMed:24478431, PubMed:32471869). Interacts with the host E3 ubiquitin ligase RIGI; this interaction sequesters RIGI in NSs-induced cytoplasmic inclusion bodies (PubMed:24478431). Interacts with the host E3 ubiquitin ligase TBK1 (via N-terminus); this interaction sequesters TBK1 in NSs-induced cytoplasmic inclusion bodies and inhibits TBK1 phosphorylation (PubMed:24335286, PubMed:24478431, PubMed:24706939, PubMed:30021900, PubMed:32471869). NSs does not interact with IKBKE/IKKE or IRF3 (PubMed:24335286). Interacts with host IRF7; this interaction sequesters IRF7 in NSs-induced cytoplasmic inclusion bodies (PubMed:30598516). Interacts with host SYNGR2; this interaction is essential to promoting the formation of the inclusion bodies to become virus factories for viral RNA replication through its interaction with NSs (PubMed:27226560). Interacts with host STAT2; this interaction sequesters STAT2 in NSs-induced cytoplasmic inclusion bodies (Probable) (PubMed:25631085, PubMed:29886262). Interacts with host TNIP2; this interaction promotes TPL2 complex formation and signaling activity leading to IL-10 production (PubMed:30617349). Interacts with host TRIM21 (via B30.2/SPRY domain); this interaction activates host NFE2L2-mediated transcriptional activation of antioxidant genes (PubMed:31852783). Interacts with host CDK1; this interaction is inclusion body dependent, it inhibits the formation and nuclear import of the cyclin B1-CDK1 complex and leads to host cell cycle arrest (PubMed:31852787).</text>
</comment>
<comment type="interaction">
    <interactant intactId="EBI-9687469">
        <id>A0A0B5AC19</id>
    </interactant>
    <interactant intactId="EBI-995350">
        <id>O95786</id>
        <label>RIGI</label>
    </interactant>
    <organismsDiffer>true</organismsDiffer>
    <experiments>5</experiments>
</comment>
<comment type="interaction">
    <interactant intactId="EBI-9687469">
        <id>A0A0B5AC19</id>
    </interactant>
    <interactant intactId="EBI-2341129">
        <id>Q14258</id>
        <label>TRIM25</label>
    </interactant>
    <organismsDiffer>true</organismsDiffer>
    <experiments>6</experiments>
</comment>
<comment type="subcellular location">
    <subcellularLocation>
        <location evidence="2">Host cytoplasm</location>
    </subcellularLocation>
    <subcellularLocation>
        <location evidence="1 6 9">Host cytoplasmic vesicle</location>
    </subcellularLocation>
    <text evidence="1 5 6 9">Localizes to the viral cytoplasmic occlusion bodies.</text>
</comment>
<comment type="similarity">
    <text evidence="15">Belongs to the Bandavirus NS-S protein family.</text>
</comment>
<comment type="caution">
    <text evidence="15">PubMed:32471869 did not detect any interaction between NSs and host RIGI, nor NSs-induced sequestration of RIGI in cytoplasmic inclusion bodies.</text>
</comment>
<evidence type="ECO:0000269" key="1">
    <source>
    </source>
</evidence>
<evidence type="ECO:0000269" key="2">
    <source>
    </source>
</evidence>
<evidence type="ECO:0000269" key="3">
    <source>
    </source>
</evidence>
<evidence type="ECO:0000269" key="4">
    <source>
    </source>
</evidence>
<evidence type="ECO:0000269" key="5">
    <source>
    </source>
</evidence>
<evidence type="ECO:0000269" key="6">
    <source>
    </source>
</evidence>
<evidence type="ECO:0000269" key="7">
    <source>
    </source>
</evidence>
<evidence type="ECO:0000269" key="8">
    <source>
    </source>
</evidence>
<evidence type="ECO:0000269" key="9">
    <source>
    </source>
</evidence>
<evidence type="ECO:0000269" key="10">
    <source>
    </source>
</evidence>
<evidence type="ECO:0000269" key="11">
    <source>
    </source>
</evidence>
<evidence type="ECO:0000269" key="12">
    <source>
    </source>
</evidence>
<evidence type="ECO:0000269" key="13">
    <source>
    </source>
</evidence>
<evidence type="ECO:0000269" key="14">
    <source>
    </source>
</evidence>
<evidence type="ECO:0000305" key="15"/>
<evidence type="ECO:0000305" key="16">
    <source>
    </source>
</evidence>
<evidence type="ECO:0000305" key="17">
    <source>
    </source>
</evidence>
<evidence type="ECO:0000305" key="18">
    <source>
    </source>
</evidence>
<evidence type="ECO:0000305" key="19">
    <source>
    </source>
</evidence>
<evidence type="ECO:0000305" key="20">
    <source>
    </source>
</evidence>
<evidence type="ECO:0000305" key="21">
    <source>
    </source>
</evidence>
<sequence length="293" mass="33793">MSLSKCSNVDLKSVAMNANTVRLEPSLGEYPTLRRDLVECSCSVLTLSMVKRMGKMTNTVWLFGNPKNPLHQLEPGLEQLLDMYYKDMRCYSQRELSALRWPSGKPSVWFLQAAHMFFSIKNSWAMETGRENWRGLFHRITKGQKYLFEGDMILDSLEAIEKRRLRLGLPEILITGLSPILDVALLQIESLARLRGMSLNHHLFTSPSLRKPLLDCWDFFIPVRKKKTDGSYSVLDEDDEPGVLHGYPHLMAHYLNRCPFHNLIRFDEELRTAALNTIWGRDWPAIGDLPKEV</sequence>
<organism>
    <name type="scientific">SFTS phlebovirus (isolate SFTSV/Human/China/HB29/2010)</name>
    <name type="common">Severe fever with thrombocytopenia virus</name>
    <dbReference type="NCBI Taxonomy" id="992212"/>
    <lineage>
        <taxon>Viruses</taxon>
        <taxon>Riboviria</taxon>
        <taxon>Orthornavirae</taxon>
        <taxon>Negarnaviricota</taxon>
        <taxon>Polyploviricotina</taxon>
        <taxon>Ellioviricetes</taxon>
        <taxon>Bunyavirales</taxon>
        <taxon>Phenuiviridae</taxon>
        <taxon>Bandavirus</taxon>
        <taxon>Bandavirus dabieense</taxon>
    </lineage>
</organism>
<organismHost>
    <name type="scientific">Haemaphysalis longicornis</name>
    <name type="common">Bush tick</name>
    <dbReference type="NCBI Taxonomy" id="44386"/>
</organismHost>
<organismHost>
    <name type="scientific">Homo sapiens</name>
    <name type="common">Human</name>
    <dbReference type="NCBI Taxonomy" id="9606"/>
</organismHost>
<protein>
    <recommendedName>
        <fullName>Non-structural protein NS-S</fullName>
        <shortName>NSs</shortName>
    </recommendedName>
</protein>
<keyword id="KW-1035">Host cytoplasm</keyword>
<keyword id="KW-1036">Host cytoplasmic vesicle</keyword>
<keyword id="KW-1079">Host G2/M cell cycle arrest by virus</keyword>
<keyword id="KW-0945">Host-virus interaction</keyword>
<keyword id="KW-1090">Inhibition of host innate immune response by virus</keyword>
<keyword id="KW-1114">Inhibition of host interferon signaling pathway by virus</keyword>
<keyword id="KW-1088">Inhibition of host RIG-I by virus</keyword>
<keyword id="KW-1113">Inhibition of host RLR pathway by virus</keyword>
<keyword id="KW-1106">Inhibition of host STAT2 by virus</keyword>
<keyword id="KW-1223">Inhibition of host TBK1 by virus</keyword>
<keyword id="KW-1225">Inhibition of host TLR pathway by virus</keyword>
<keyword id="KW-0922">Interferon antiviral system evasion</keyword>
<keyword id="KW-1121">Modulation of host cell cycle by virus</keyword>
<keyword id="KW-1185">Reference proteome</keyword>
<keyword id="KW-0899">Viral immunoevasion</keyword>
<proteinExistence type="evidence at protein level"/>
<feature type="chain" id="PRO_0000456169" description="Non-structural protein NS-S">
    <location>
        <begin position="1"/>
        <end position="293"/>
    </location>
</feature>
<feature type="region of interest" description="Essential for inhibition of IFN-beta activation and interaction with host TBK1" evidence="8">
    <location>
        <begin position="21"/>
        <end position="29"/>
    </location>
</feature>
<feature type="region of interest" description="Involved in inclusion bodies formation" evidence="3 8">
    <location>
        <begin position="66"/>
        <end position="69"/>
    </location>
</feature>
<feature type="region of interest" description="Interaction with host TNIP2" evidence="10">
    <location>
        <begin position="148"/>
        <end position="220"/>
    </location>
</feature>
<feature type="site" description="Essential for suppression of TBK1/IRF3-mediated IFN response" evidence="8">
    <location>
        <position position="21"/>
    </location>
</feature>
<feature type="site" description="Essential for suppression of TBK1/IRF3-mediated IFN response" evidence="8">
    <location>
        <position position="23"/>
    </location>
</feature>
<feature type="mutagenesis site" description="Almost complete loss of the inhibition of IFN-beta activation and interaction with host TBK1." evidence="8">
    <original>VRL</original>
    <variation>ARA</variation>
    <location>
        <begin position="21"/>
        <end position="23"/>
    </location>
</feature>
<feature type="mutagenesis site" description="Almost complete loss of the inhibition of IFN-beta activation and interaction with host TBK1." evidence="8">
    <original>EPS</original>
    <variation>APA</variation>
    <location>
        <begin position="24"/>
        <end position="26"/>
    </location>
</feature>
<feature type="mutagenesis site" description="50% loss of the inhibition of IFN-beta promoter activity and loss of interaction with host TBK1." evidence="8">
    <original>LGE</original>
    <variation>AGA</variation>
    <location>
        <begin position="27"/>
        <end position="29"/>
    </location>
</feature>
<feature type="mutagenesis site" description="Disruption of NSs-induced inclusion bodies and loss of inhibition of the host IFN responses. No effect on the interaction with host STAT2; complete loss of inhibition of IFN-stimulated phosphorylation of STAT2." evidence="3 7">
    <original>PKNP</original>
    <variation>AKNA</variation>
    <location>
        <begin position="66"/>
        <end position="69"/>
    </location>
</feature>
<feature type="mutagenesis site" description="Loss of ability to sequester host TBK1 into viral cytoplasmic vesicles." evidence="8 10">
    <original>PKNP</original>
    <variation>AKNA</variation>
    <location>
        <begin position="66"/>
        <end position="69"/>
    </location>
</feature>
<feature type="mutagenesis site" description="Complete loss of ability to induce TPL2 signaling and IL-10 production and drastically reduced pathogenesis. Complete loss of formation of NSs-induced inclusion bodies and secretion of IFN-beta. Stronger interaction with host ABIN2." evidence="10">
    <original>P</original>
    <variation>A</variation>
    <location>
        <position position="102"/>
    </location>
</feature>
<feature type="mutagenesis site" description="No effect on the formation of NSs-induced inclusion bodies." evidence="10">
    <original>WRGL</original>
    <variation>ARGA</variation>
    <location>
        <begin position="133"/>
        <end position="136"/>
    </location>
</feature>
<feature type="mutagenesis site" description="Complete loss of interaction with host ABIN2 and ability to induce host TPL2 signaling and IL-10 production. Drastically reduced pathogenesis. No effect on the formation of NSs-induced inclusion bodies and secretion of IFN-beta." evidence="10">
    <original>K</original>
    <variation>R</variation>
    <location>
        <position position="211"/>
    </location>
</feature>
<feature type="mutagenesis site" description="Complete loss of interaction with host TRIM21 and NFE2L2-mediated transcriptional activation. No effet on the formation of NSs-induced inclusion bodies. Delay in pathogenesis." evidence="11">
    <original>KKTDG</original>
    <variation>AAAAA</variation>
    <location>
        <begin position="226"/>
        <end position="230"/>
    </location>
</feature>
<feature type="mutagenesis site" description="No effect on the formation of NSs-induced inclusion bodies." evidence="10">
    <original>DWP</original>
    <variation>AAA</variation>
    <location>
        <begin position="282"/>
        <end position="284"/>
    </location>
</feature>
<feature type="sequence conflict" description="In Ref. 1; ADZ04473." evidence="15" ref="1">
    <original>M</original>
    <variation>L</variation>
    <location>
        <position position="197"/>
    </location>
</feature>